<protein>
    <recommendedName>
        <fullName>Small glutamine-rich tetratricopeptide repeat-containing protein alpha</fullName>
    </recommendedName>
    <alternativeName>
        <fullName>Alpha-SGT</fullName>
    </alternativeName>
</protein>
<dbReference type="EMBL" id="BC109513">
    <property type="protein sequence ID" value="AAI09514.1"/>
    <property type="molecule type" value="mRNA"/>
</dbReference>
<dbReference type="RefSeq" id="NP_001033119.1">
    <property type="nucleotide sequence ID" value="NM_001038030.2"/>
</dbReference>
<dbReference type="RefSeq" id="XP_005209059.1">
    <property type="nucleotide sequence ID" value="XM_005209002.5"/>
</dbReference>
<dbReference type="RefSeq" id="XP_010805314.1">
    <property type="nucleotide sequence ID" value="XM_010807012.4"/>
</dbReference>
<dbReference type="RefSeq" id="XP_010805315.1">
    <property type="nucleotide sequence ID" value="XM_010807013.4"/>
</dbReference>
<dbReference type="RefSeq" id="XP_024849689.1">
    <property type="nucleotide sequence ID" value="XM_024993921.2"/>
</dbReference>
<dbReference type="SMR" id="Q32LM2"/>
<dbReference type="FunCoup" id="Q32LM2">
    <property type="interactions" value="3896"/>
</dbReference>
<dbReference type="STRING" id="9913.ENSBTAP00000020081"/>
<dbReference type="PaxDb" id="9913-ENSBTAP00000020081"/>
<dbReference type="PeptideAtlas" id="Q32LM2"/>
<dbReference type="Ensembl" id="ENSBTAT00000020081.6">
    <property type="protein sequence ID" value="ENSBTAP00000020081.5"/>
    <property type="gene ID" value="ENSBTAG00000015090.7"/>
</dbReference>
<dbReference type="GeneID" id="504701"/>
<dbReference type="KEGG" id="bta:504701"/>
<dbReference type="CTD" id="6449"/>
<dbReference type="VEuPathDB" id="HostDB:ENSBTAG00000015090"/>
<dbReference type="VGNC" id="VGNC:34553">
    <property type="gene designation" value="SGTA"/>
</dbReference>
<dbReference type="eggNOG" id="KOG0553">
    <property type="taxonomic scope" value="Eukaryota"/>
</dbReference>
<dbReference type="GeneTree" id="ENSGT00940000159037"/>
<dbReference type="HOGENOM" id="CLU_044224_0_0_1"/>
<dbReference type="InParanoid" id="Q32LM2"/>
<dbReference type="OMA" id="LAIKDCH"/>
<dbReference type="OrthoDB" id="2335338at2759"/>
<dbReference type="TreeFam" id="TF313092"/>
<dbReference type="Reactome" id="R-BTA-9609523">
    <property type="pathway name" value="Insertion of tail-anchored proteins into the endoplasmic reticulum membrane"/>
</dbReference>
<dbReference type="Proteomes" id="UP000009136">
    <property type="component" value="Chromosome 7"/>
</dbReference>
<dbReference type="Bgee" id="ENSBTAG00000015090">
    <property type="expression patterns" value="Expressed in floor plate of diencephalon and 105 other cell types or tissues"/>
</dbReference>
<dbReference type="GO" id="GO:0016020">
    <property type="term" value="C:membrane"/>
    <property type="evidence" value="ECO:0000318"/>
    <property type="project" value="GO_Central"/>
</dbReference>
<dbReference type="GO" id="GO:0005634">
    <property type="term" value="C:nucleus"/>
    <property type="evidence" value="ECO:0007669"/>
    <property type="project" value="UniProtKB-SubCell"/>
</dbReference>
<dbReference type="GO" id="GO:0072380">
    <property type="term" value="C:TRC complex"/>
    <property type="evidence" value="ECO:0000318"/>
    <property type="project" value="GO_Central"/>
</dbReference>
<dbReference type="GO" id="GO:0060090">
    <property type="term" value="F:molecular adaptor activity"/>
    <property type="evidence" value="ECO:0000318"/>
    <property type="project" value="GO_Central"/>
</dbReference>
<dbReference type="GO" id="GO:0036503">
    <property type="term" value="P:ERAD pathway"/>
    <property type="evidence" value="ECO:0000250"/>
    <property type="project" value="UniProtKB"/>
</dbReference>
<dbReference type="GO" id="GO:1904293">
    <property type="term" value="P:negative regulation of ERAD pathway"/>
    <property type="evidence" value="ECO:0000250"/>
    <property type="project" value="UniProtKB"/>
</dbReference>
<dbReference type="GO" id="GO:2000059">
    <property type="term" value="P:negative regulation of ubiquitin-dependent protein catabolic process"/>
    <property type="evidence" value="ECO:0000250"/>
    <property type="project" value="UniProtKB"/>
</dbReference>
<dbReference type="GO" id="GO:0006620">
    <property type="term" value="P:post-translational protein targeting to endoplasmic reticulum membrane"/>
    <property type="evidence" value="ECO:0000318"/>
    <property type="project" value="GO_Central"/>
</dbReference>
<dbReference type="GO" id="GO:0071816">
    <property type="term" value="P:tail-anchored membrane protein insertion into ER membrane"/>
    <property type="evidence" value="ECO:0000250"/>
    <property type="project" value="UniProtKB"/>
</dbReference>
<dbReference type="FunFam" id="1.20.5.420:FF:000002">
    <property type="entry name" value="Small glutamine-rich tetratricopeptide repeat-containing protein alpha"/>
    <property type="match status" value="1"/>
</dbReference>
<dbReference type="FunFam" id="1.25.40.10:FF:000108">
    <property type="entry name" value="Small glutamine-rich tetratricopeptide repeat-containing protein alpha"/>
    <property type="match status" value="1"/>
</dbReference>
<dbReference type="Gene3D" id="1.20.5.420">
    <property type="entry name" value="Immunoglobulin FC, subunit C"/>
    <property type="match status" value="1"/>
</dbReference>
<dbReference type="Gene3D" id="1.25.40.10">
    <property type="entry name" value="Tetratricopeptide repeat domain"/>
    <property type="match status" value="1"/>
</dbReference>
<dbReference type="InterPro" id="IPR047150">
    <property type="entry name" value="SGT"/>
</dbReference>
<dbReference type="InterPro" id="IPR032374">
    <property type="entry name" value="SGTA_dimer"/>
</dbReference>
<dbReference type="InterPro" id="IPR011990">
    <property type="entry name" value="TPR-like_helical_dom_sf"/>
</dbReference>
<dbReference type="InterPro" id="IPR019734">
    <property type="entry name" value="TPR_rpt"/>
</dbReference>
<dbReference type="PANTHER" id="PTHR45831">
    <property type="entry name" value="LD24721P"/>
    <property type="match status" value="1"/>
</dbReference>
<dbReference type="PANTHER" id="PTHR45831:SF3">
    <property type="entry name" value="SMALL GLUTAMINE-RICH TETRATRICOPEPTIDE REPEAT-CONTAINING PROTEIN ALPHA"/>
    <property type="match status" value="1"/>
</dbReference>
<dbReference type="Pfam" id="PF16546">
    <property type="entry name" value="SGTA_dimer"/>
    <property type="match status" value="1"/>
</dbReference>
<dbReference type="Pfam" id="PF00515">
    <property type="entry name" value="TPR_1"/>
    <property type="match status" value="2"/>
</dbReference>
<dbReference type="Pfam" id="PF13181">
    <property type="entry name" value="TPR_8"/>
    <property type="match status" value="1"/>
</dbReference>
<dbReference type="SMART" id="SM00028">
    <property type="entry name" value="TPR"/>
    <property type="match status" value="3"/>
</dbReference>
<dbReference type="SUPFAM" id="SSF48452">
    <property type="entry name" value="TPR-like"/>
    <property type="match status" value="1"/>
</dbReference>
<dbReference type="PROSITE" id="PS50005">
    <property type="entry name" value="TPR"/>
    <property type="match status" value="3"/>
</dbReference>
<dbReference type="PROSITE" id="PS50293">
    <property type="entry name" value="TPR_REGION"/>
    <property type="match status" value="1"/>
</dbReference>
<comment type="function">
    <text evidence="1">Co-chaperone that binds misfolded and hydrophobic patches-containing client proteins in the cytosol. Mediates their targeting to the endoplasmic reticulum but also regulates their sorting to the proteasome when targeting fails. Functions in tail-anchored/type II transmembrane proteins membrane insertion constituting with ASNA1 and the BAG6 complex a targeting module. Functions upstream of the BAG6 complex and ASNA1, binding more rapidly the transmembrane domain of newly synthesized proteins. It is also involved in the regulation of the endoplasmic reticulum-associated misfolded protein catabolic process via its interaction with BAG6: collaborates with the BAG6 complex to maintain hydrophobic substrates in non-ubiquitinated states. Competes with RNF126 for interaction with BAG6, preventing the ubiquitination of client proteins associated with the BAG6 complex. Binds directly to HSC70 and HSP70 and regulates their ATPase activity.</text>
</comment>
<comment type="subunit">
    <text evidence="1 2">Homodimer (By similarity). Homooligomer (By similarity). Interacts with DNAJC5 and DNAJC5B. Interacts (via TPR repeats) with HSP90AA1. Interacts (via Gln-rich region) with SLC2A1. Interacts with HSP90AB1. Interacts (via TPR repeats) with HSPA8/Hsc70; the interaction is direct. Interacts with BAG6 (via ubiquitin-like domain); interaction prevents interaction between BAG6 and RNF126. Forms a multiprotein complex, at least composed of DNAJB12, DNAJB14, HSPA8/Hsc70 and SGTA; interaction with DNAJB14 and HSPA8/Hsc70 is direct (By similarity).</text>
</comment>
<comment type="subcellular location">
    <subcellularLocation>
        <location evidence="1">Cytoplasm</location>
    </subcellularLocation>
    <subcellularLocation>
        <location evidence="1">Nucleus</location>
    </subcellularLocation>
    <text evidence="1">Co-localizes with HSP90AB1 in the cytoplasm. Increased nuclear accumulation seen during cell apoptosis. Interacts with BAG6 (via ubiquitin-like domain); interaction prevents interaction between BAG6 and RNF126.</text>
</comment>
<comment type="similarity">
    <text evidence="4">Belongs to the SGT family.</text>
</comment>
<proteinExistence type="evidence at transcript level"/>
<keyword id="KW-0007">Acetylation</keyword>
<keyword id="KW-0143">Chaperone</keyword>
<keyword id="KW-0963">Cytoplasm</keyword>
<keyword id="KW-0539">Nucleus</keyword>
<keyword id="KW-0597">Phosphoprotein</keyword>
<keyword id="KW-1185">Reference proteome</keyword>
<keyword id="KW-0677">Repeat</keyword>
<keyword id="KW-0802">TPR repeat</keyword>
<evidence type="ECO:0000250" key="1">
    <source>
        <dbReference type="UniProtKB" id="O43765"/>
    </source>
</evidence>
<evidence type="ECO:0000250" key="2">
    <source>
        <dbReference type="UniProtKB" id="O70593"/>
    </source>
</evidence>
<evidence type="ECO:0000256" key="3">
    <source>
        <dbReference type="SAM" id="MobiDB-lite"/>
    </source>
</evidence>
<evidence type="ECO:0000305" key="4"/>
<reference key="1">
    <citation type="submission" date="2005-11" db="EMBL/GenBank/DDBJ databases">
        <authorList>
            <consortium name="NIH - Mammalian Gene Collection (MGC) project"/>
        </authorList>
    </citation>
    <scope>NUCLEOTIDE SEQUENCE [LARGE SCALE MRNA]</scope>
    <source>
        <strain>Crossbred X Angus</strain>
        <tissue>Liver</tissue>
    </source>
</reference>
<sequence>MDNKKRLAYAIIRFLHDQLRHGELSSDAQESLEVAIQCLETAFGVTVEDSDLALPQTLPEIFEAAAAGKELPPDLRSPQETPPSEEDSAEAERLKTEGNEQMKVENFEAAVHFYGKAIELNPANAVYFCNRAAAYSKLGNYAGAVQDCERAICIDPSYSKAYGRMGLALSSLNKHTEAVAYYRKALELDPDNETYKSNLKVAELRLREAPSPTGGVGSFDIAGLLNNPSFMSMASNLMNNPQVQQLMSGMISGGHNPLGTPGTSPSQNDLASLIQAGQQFAQQMQQQNPELIEQLRSQIRSRTPSASNDDQQE</sequence>
<name>SGTA_BOVIN</name>
<accession>Q32LM2</accession>
<feature type="chain" id="PRO_0000333273" description="Small glutamine-rich tetratricopeptide repeat-containing protein alpha">
    <location>
        <begin position="1"/>
        <end position="313"/>
    </location>
</feature>
<feature type="repeat" description="TPR 1">
    <location>
        <begin position="91"/>
        <end position="124"/>
    </location>
</feature>
<feature type="repeat" description="TPR 2">
    <location>
        <begin position="125"/>
        <end position="158"/>
    </location>
</feature>
<feature type="repeat" description="TPR 3">
    <location>
        <begin position="159"/>
        <end position="192"/>
    </location>
</feature>
<feature type="region of interest" description="Disordered" evidence="3">
    <location>
        <begin position="69"/>
        <end position="97"/>
    </location>
</feature>
<feature type="modified residue" description="Phosphoserine" evidence="1">
    <location>
        <position position="77"/>
    </location>
</feature>
<feature type="modified residue" description="Phosphothreonine" evidence="1">
    <location>
        <position position="81"/>
    </location>
</feature>
<feature type="modified residue" description="Phosphoserine" evidence="2">
    <location>
        <position position="84"/>
    </location>
</feature>
<feature type="modified residue" description="N6-acetyllysine" evidence="1">
    <location>
        <position position="137"/>
    </location>
</feature>
<feature type="modified residue" description="Phosphoserine" evidence="1">
    <location>
        <position position="301"/>
    </location>
</feature>
<feature type="modified residue" description="Phosphothreonine" evidence="1">
    <location>
        <position position="303"/>
    </location>
</feature>
<feature type="modified residue" description="Phosphoserine" evidence="1">
    <location>
        <position position="305"/>
    </location>
</feature>
<organism>
    <name type="scientific">Bos taurus</name>
    <name type="common">Bovine</name>
    <dbReference type="NCBI Taxonomy" id="9913"/>
    <lineage>
        <taxon>Eukaryota</taxon>
        <taxon>Metazoa</taxon>
        <taxon>Chordata</taxon>
        <taxon>Craniata</taxon>
        <taxon>Vertebrata</taxon>
        <taxon>Euteleostomi</taxon>
        <taxon>Mammalia</taxon>
        <taxon>Eutheria</taxon>
        <taxon>Laurasiatheria</taxon>
        <taxon>Artiodactyla</taxon>
        <taxon>Ruminantia</taxon>
        <taxon>Pecora</taxon>
        <taxon>Bovidae</taxon>
        <taxon>Bovinae</taxon>
        <taxon>Bos</taxon>
    </lineage>
</organism>
<gene>
    <name type="primary">SGTA</name>
</gene>